<feature type="signal peptide" evidence="3">
    <location>
        <begin position="1"/>
        <end position="22"/>
    </location>
</feature>
<feature type="chain" id="PRO_5002866289" description="Salivary protein 15 Iper-1">
    <location>
        <begin position="23"/>
        <end position="135"/>
    </location>
</feature>
<feature type="region of interest" description="CD4-binding" evidence="2">
    <location>
        <begin position="116"/>
        <end position="135"/>
    </location>
</feature>
<feature type="glycosylation site" description="N-linked (GlcNAc...) asparagine" evidence="4">
    <location>
        <position position="93"/>
    </location>
</feature>
<feature type="glycosylation site" description="N-linked (GlcNAc...) asparagine" evidence="4">
    <location>
        <position position="104"/>
    </location>
</feature>
<accession>B7XFU7</accession>
<organism>
    <name type="scientific">Ixodes persulcatus</name>
    <name type="common">Taiga tick</name>
    <dbReference type="NCBI Taxonomy" id="34615"/>
    <lineage>
        <taxon>Eukaryota</taxon>
        <taxon>Metazoa</taxon>
        <taxon>Ecdysozoa</taxon>
        <taxon>Arthropoda</taxon>
        <taxon>Chelicerata</taxon>
        <taxon>Arachnida</taxon>
        <taxon>Acari</taxon>
        <taxon>Parasitiformes</taxon>
        <taxon>Ixodida</taxon>
        <taxon>Ixodoidea</taxon>
        <taxon>Ixodidae</taxon>
        <taxon>Ixodinae</taxon>
        <taxon>Ixodes</taxon>
    </lineage>
</organism>
<proteinExistence type="evidence at protein level"/>
<sequence length="135" mass="14972">MESFVAMKVVCILFLFVVAAEAASTKESPAVNPSKGKDRIKFNFPRYVPNHHVFASNLLKLCTEYTPETQARNDGSQATYKPRINDLQVNFKNCTFLCKREFGNVTLNLPVDTPCGPNKQTCADKSKCVGHIPGC</sequence>
<gene>
    <name evidence="11" type="primary">Salp15</name>
</gene>
<protein>
    <recommendedName>
        <fullName evidence="7">Salivary protein 15 Iper-1</fullName>
        <shortName evidence="8">IperSalp15-1</shortName>
        <shortName evidence="7">Salp15 Iper-1</shortName>
    </recommendedName>
    <alternativeName>
        <fullName evidence="7">Salp15-like</fullName>
    </alternativeName>
</protein>
<dbReference type="EMBL" id="AB470645">
    <property type="protein sequence ID" value="BAH09310.1"/>
    <property type="molecule type" value="mRNA"/>
</dbReference>
<dbReference type="GO" id="GO:0005576">
    <property type="term" value="C:extracellular region"/>
    <property type="evidence" value="ECO:0007669"/>
    <property type="project" value="UniProtKB-SubCell"/>
</dbReference>
<dbReference type="InterPro" id="IPR021971">
    <property type="entry name" value="Salp15"/>
</dbReference>
<dbReference type="Pfam" id="PF12115">
    <property type="entry name" value="Salp15"/>
    <property type="match status" value="1"/>
</dbReference>
<comment type="function">
    <text evidence="1 2">Salivary tick protein that downregulates host immune system by binding to both dendritic cells, and CD4(+) T cells. Specifically binds to the CD4 coreceptor on T cells. This interaction prevents the activation of the Src kinase, Lck, and its downstream substrate Zap-70, and results in deficient activation of PLCgamma1, the repression of calcium fluxes triggered by T-cell antigen receptor (TCR) ligation, and a subsequent reduction in interleukin-2 production. This salivary protein also binds to DC-SIGN (CD209) on dendritic cells (DC) and activates the Raf-1 kinase/MEK signaling pathway that results in down-regulating expression of pro-inflammatory cytokines. Furthermore, it inhibits T cell proliferation induced by DCs (By similarity). It also inhibits in vitro keratinocyte inflammation induced by Borrelia burgdorferi or by the major outer surface protein (OspC) of Borrelia. In addition, it downregulates chemokines and monocyte chemoattractant protein 1, as well as several antimicrobial peptides such as defensins, cathelicidin, psoriasin, and RNase 7 (By similarity). Apart from its immunomodulatory activities, it is also associated with protection of Borrelia spirochetes from antibody-mediated killing through its binding to OspC. In vivo, tests on different immune disease animal models show promising therapeutic results, e.g., in inhibiting HIV infection, experimental autoimmune encephalomyelitis, transplantation rejection, and asthma (By similarity).</text>
</comment>
<comment type="function">
    <text evidence="6">(Microbial infection) Protects Borrelia garinii from anti-Borrelia antibody-mediated cytotoxicity in vitro (PubMed:25796479). May facilitate B.garinii transmission in mouse model (PubMed:25796479).</text>
</comment>
<comment type="function">
    <text evidence="6">(Microbial infection) Protects Borrelia burgdorferi from anti-Borrelia antibody-mediated cytotoxicity in vitro.</text>
</comment>
<comment type="function">
    <text evidence="6">(Microbial infection) Protects Borrelia afzelii from anti-Borrelia antibody-mediated cytotoxicity in vitro.</text>
</comment>
<comment type="subunit">
    <text evidence="2">Interacts with host CD4. Interacts with host DC-SIGN (CD209).</text>
</comment>
<comment type="subunit">
    <text evidence="6">(Microbial infection) Interacts with Borrelia outer surface protein C (OspC).</text>
</comment>
<comment type="subcellular location">
    <subcellularLocation>
        <location evidence="6 10">Secreted</location>
    </subcellularLocation>
</comment>
<comment type="tissue specificity">
    <text evidence="5">Expressed in salivary glands from feeding female ticks (PubMed:20201978). Highly expressed 4 days after start of feeding (PubMed:20201978).</text>
</comment>
<comment type="induction">
    <text evidence="5">By feeding.</text>
</comment>
<comment type="similarity">
    <text evidence="9">Belongs to the salp15 family.</text>
</comment>
<evidence type="ECO:0000250" key="1">
    <source>
        <dbReference type="UniProtKB" id="A8CZZ0"/>
    </source>
</evidence>
<evidence type="ECO:0000250" key="2">
    <source>
        <dbReference type="UniProtKB" id="Q95WZ4"/>
    </source>
</evidence>
<evidence type="ECO:0000255" key="3"/>
<evidence type="ECO:0000255" key="4">
    <source>
        <dbReference type="PROSITE-ProRule" id="PRU00498"/>
    </source>
</evidence>
<evidence type="ECO:0000269" key="5">
    <source>
    </source>
</evidence>
<evidence type="ECO:0000269" key="6">
    <source>
    </source>
</evidence>
<evidence type="ECO:0000303" key="7">
    <source>
    </source>
</evidence>
<evidence type="ECO:0000303" key="8">
    <source>
    </source>
</evidence>
<evidence type="ECO:0000305" key="9"/>
<evidence type="ECO:0000305" key="10">
    <source>
    </source>
</evidence>
<evidence type="ECO:0000312" key="11">
    <source>
        <dbReference type="EMBL" id="BAH09310.1"/>
    </source>
</evidence>
<name>SP151_IXOPE</name>
<keyword id="KW-0325">Glycoprotein</keyword>
<keyword id="KW-0964">Secreted</keyword>
<keyword id="KW-0732">Signal</keyword>
<reference evidence="11" key="1">
    <citation type="journal article" date="2010" name="Insect Mol. Biol.">
        <title>Two novel Salp15-like immunosuppressant genes from salivary glands of Ixodes persulcatus Schulze tick.</title>
        <authorList>
            <person name="Mori A."/>
            <person name="Konnai S."/>
            <person name="Yamada S."/>
            <person name="Hidano A."/>
            <person name="Murase Y."/>
            <person name="Ito T."/>
            <person name="Takano A."/>
            <person name="Kawabata H."/>
            <person name="Onuma M."/>
            <person name="Ohashi K."/>
        </authorList>
    </citation>
    <scope>NUCLEOTIDE SEQUENCE [MRNA]</scope>
    <scope>TISSUE SPECIFICITY</scope>
    <scope>INDUCTION BY FEEDING</scope>
    <source>
        <tissue>Salivary gland</tissue>
    </source>
</reference>
<reference evidence="9" key="2">
    <citation type="journal article" date="2015" name="Insect Biochem. Mol. Biol.">
        <title>An investigation of binding ability of Ixodes persulcatus Schulze Salp15 with Lyme disease spirochetes.</title>
        <authorList>
            <person name="Murase Y."/>
            <person name="Konnai S."/>
            <person name="Yamada S."/>
            <person name="Githaka N."/>
            <person name="Isezaki M."/>
            <person name="Ito T."/>
            <person name="Takano A."/>
            <person name="Ando S."/>
            <person name="Kawabata H."/>
            <person name="Murata S."/>
            <person name="Ohashi K."/>
        </authorList>
    </citation>
    <scope>FUNCTION (MICROBIAL INFECTION)</scope>
    <scope>INTERACTION WITH BORRELIA OUTER SURFACE PROTEIN C (OSPC)</scope>
    <scope>SUBCELLULAR LOCATION</scope>
</reference>